<dbReference type="EC" id="7.1.1.-"/>
<dbReference type="EMBL" id="CP000849">
    <property type="protein sequence ID" value="ABV78665.1"/>
    <property type="molecule type" value="Genomic_DNA"/>
</dbReference>
<dbReference type="RefSeq" id="WP_011477842.1">
    <property type="nucleotide sequence ID" value="NC_009883.1"/>
</dbReference>
<dbReference type="SMR" id="A8GYE0"/>
<dbReference type="KEGG" id="rbo:A1I_01365"/>
<dbReference type="HOGENOM" id="CLU_014881_0_1_5"/>
<dbReference type="GO" id="GO:0051539">
    <property type="term" value="F:4 iron, 4 sulfur cluster binding"/>
    <property type="evidence" value="ECO:0007669"/>
    <property type="project" value="UniProtKB-KW"/>
</dbReference>
<dbReference type="GO" id="GO:0010181">
    <property type="term" value="F:FMN binding"/>
    <property type="evidence" value="ECO:0007669"/>
    <property type="project" value="InterPro"/>
</dbReference>
<dbReference type="GO" id="GO:0046872">
    <property type="term" value="F:metal ion binding"/>
    <property type="evidence" value="ECO:0007669"/>
    <property type="project" value="UniProtKB-KW"/>
</dbReference>
<dbReference type="GO" id="GO:0051287">
    <property type="term" value="F:NAD binding"/>
    <property type="evidence" value="ECO:0007669"/>
    <property type="project" value="InterPro"/>
</dbReference>
<dbReference type="GO" id="GO:0008137">
    <property type="term" value="F:NADH dehydrogenase (ubiquinone) activity"/>
    <property type="evidence" value="ECO:0007669"/>
    <property type="project" value="InterPro"/>
</dbReference>
<dbReference type="GO" id="GO:0048038">
    <property type="term" value="F:quinone binding"/>
    <property type="evidence" value="ECO:0007669"/>
    <property type="project" value="UniProtKB-KW"/>
</dbReference>
<dbReference type="FunFam" id="1.20.1440.230:FF:000001">
    <property type="entry name" value="Mitochondrial NADH dehydrogenase flavoprotein 1"/>
    <property type="match status" value="1"/>
</dbReference>
<dbReference type="FunFam" id="3.10.20.600:FF:000001">
    <property type="entry name" value="NADH dehydrogenase [ubiquinone] flavoprotein 1, mitochondrial"/>
    <property type="match status" value="1"/>
</dbReference>
<dbReference type="FunFam" id="3.40.50.11540:FF:000001">
    <property type="entry name" value="NADH dehydrogenase [ubiquinone] flavoprotein 1, mitochondrial"/>
    <property type="match status" value="1"/>
</dbReference>
<dbReference type="Gene3D" id="3.10.20.600">
    <property type="match status" value="1"/>
</dbReference>
<dbReference type="Gene3D" id="3.40.50.11540">
    <property type="entry name" value="NADH-ubiquinone oxidoreductase 51kDa subunit"/>
    <property type="match status" value="1"/>
</dbReference>
<dbReference type="Gene3D" id="1.20.1440.230">
    <property type="entry name" value="NADH-ubiquinone oxidoreductase 51kDa subunit, iron-sulphur binding domain"/>
    <property type="match status" value="1"/>
</dbReference>
<dbReference type="InterPro" id="IPR050837">
    <property type="entry name" value="ComplexI_51kDa_subunit"/>
</dbReference>
<dbReference type="InterPro" id="IPR001949">
    <property type="entry name" value="NADH-UbQ_OxRdtase_51kDa_CS"/>
</dbReference>
<dbReference type="InterPro" id="IPR011537">
    <property type="entry name" value="NADH-UbQ_OxRdtase_suF"/>
</dbReference>
<dbReference type="InterPro" id="IPR011538">
    <property type="entry name" value="Nuo51_FMN-bd"/>
</dbReference>
<dbReference type="InterPro" id="IPR037225">
    <property type="entry name" value="Nuo51_FMN-bd_sf"/>
</dbReference>
<dbReference type="InterPro" id="IPR019575">
    <property type="entry name" value="Nuop51_4Fe4S-bd"/>
</dbReference>
<dbReference type="InterPro" id="IPR037207">
    <property type="entry name" value="Nuop51_4Fe4S-bd_sf"/>
</dbReference>
<dbReference type="InterPro" id="IPR054765">
    <property type="entry name" value="SLBB_dom"/>
</dbReference>
<dbReference type="NCBIfam" id="TIGR01959">
    <property type="entry name" value="nuoF_fam"/>
    <property type="match status" value="1"/>
</dbReference>
<dbReference type="NCBIfam" id="NF010120">
    <property type="entry name" value="PRK13596.1"/>
    <property type="match status" value="1"/>
</dbReference>
<dbReference type="PANTHER" id="PTHR11780:SF10">
    <property type="entry name" value="NADH DEHYDROGENASE [UBIQUINONE] FLAVOPROTEIN 1, MITOCHONDRIAL"/>
    <property type="match status" value="1"/>
</dbReference>
<dbReference type="PANTHER" id="PTHR11780">
    <property type="entry name" value="NADH-UBIQUINONE OXIDOREDUCTASE FLAVOPROTEIN 1 NDUFV1"/>
    <property type="match status" value="1"/>
</dbReference>
<dbReference type="Pfam" id="PF01512">
    <property type="entry name" value="Complex1_51K"/>
    <property type="match status" value="1"/>
</dbReference>
<dbReference type="Pfam" id="PF10589">
    <property type="entry name" value="NADH_4Fe-4S"/>
    <property type="match status" value="1"/>
</dbReference>
<dbReference type="Pfam" id="PF22461">
    <property type="entry name" value="SLBB_2"/>
    <property type="match status" value="1"/>
</dbReference>
<dbReference type="SMART" id="SM00928">
    <property type="entry name" value="NADH_4Fe-4S"/>
    <property type="match status" value="1"/>
</dbReference>
<dbReference type="SUPFAM" id="SSF142019">
    <property type="entry name" value="Nqo1 FMN-binding domain-like"/>
    <property type="match status" value="1"/>
</dbReference>
<dbReference type="SUPFAM" id="SSF142984">
    <property type="entry name" value="Nqo1 middle domain-like"/>
    <property type="match status" value="1"/>
</dbReference>
<dbReference type="SUPFAM" id="SSF140490">
    <property type="entry name" value="Nqo1C-terminal domain-like"/>
    <property type="match status" value="1"/>
</dbReference>
<dbReference type="PROSITE" id="PS00644">
    <property type="entry name" value="COMPLEX1_51K_1"/>
    <property type="match status" value="1"/>
</dbReference>
<dbReference type="PROSITE" id="PS00645">
    <property type="entry name" value="COMPLEX1_51K_2"/>
    <property type="match status" value="1"/>
</dbReference>
<reference key="1">
    <citation type="submission" date="2007-09" db="EMBL/GenBank/DDBJ databases">
        <title>Complete genome sequencing of Rickettsia bellii.</title>
        <authorList>
            <person name="Madan A."/>
            <person name="Lee H."/>
            <person name="Madan A."/>
            <person name="Yoon J.-G."/>
            <person name="Ryu G.-Y."/>
            <person name="Dasch G."/>
            <person name="Ereemeva M."/>
        </authorList>
    </citation>
    <scope>NUCLEOTIDE SEQUENCE [LARGE SCALE GENOMIC DNA]</scope>
    <source>
        <strain>OSU 85-389</strain>
    </source>
</reference>
<evidence type="ECO:0000250" key="1"/>
<evidence type="ECO:0000255" key="2"/>
<evidence type="ECO:0000305" key="3"/>
<organism>
    <name type="scientific">Rickettsia bellii (strain OSU 85-389)</name>
    <dbReference type="NCBI Taxonomy" id="391896"/>
    <lineage>
        <taxon>Bacteria</taxon>
        <taxon>Pseudomonadati</taxon>
        <taxon>Pseudomonadota</taxon>
        <taxon>Alphaproteobacteria</taxon>
        <taxon>Rickettsiales</taxon>
        <taxon>Rickettsiaceae</taxon>
        <taxon>Rickettsieae</taxon>
        <taxon>Rickettsia</taxon>
        <taxon>belli group</taxon>
    </lineage>
</organism>
<protein>
    <recommendedName>
        <fullName>NADH-quinone oxidoreductase subunit F</fullName>
        <ecNumber>7.1.1.-</ecNumber>
    </recommendedName>
    <alternativeName>
        <fullName>NADH dehydrogenase I subunit F</fullName>
    </alternativeName>
    <alternativeName>
        <fullName>NDH-1 subunit F</fullName>
    </alternativeName>
</protein>
<name>NUOF_RICB8</name>
<comment type="function">
    <text evidence="1">NDH-1 shuttles electrons from NADH, via FMN and iron-sulfur (Fe-S) centers, to quinones in the respiratory chain. Couples the redox reaction to proton translocation (for every two electrons transferred, four hydrogen ions are translocated across the cytoplasmic membrane), and thus conserves the redox energy in a proton gradient (By similarity).</text>
</comment>
<comment type="catalytic activity">
    <reaction>
        <text>a quinone + NADH + 5 H(+)(in) = a quinol + NAD(+) + 4 H(+)(out)</text>
        <dbReference type="Rhea" id="RHEA:57888"/>
        <dbReference type="ChEBI" id="CHEBI:15378"/>
        <dbReference type="ChEBI" id="CHEBI:24646"/>
        <dbReference type="ChEBI" id="CHEBI:57540"/>
        <dbReference type="ChEBI" id="CHEBI:57945"/>
        <dbReference type="ChEBI" id="CHEBI:132124"/>
    </reaction>
</comment>
<comment type="cofactor">
    <cofactor evidence="3">
        <name>FMN</name>
        <dbReference type="ChEBI" id="CHEBI:58210"/>
    </cofactor>
    <text evidence="3">Binds 1 FMN.</text>
</comment>
<comment type="cofactor">
    <cofactor evidence="3">
        <name>[4Fe-4S] cluster</name>
        <dbReference type="ChEBI" id="CHEBI:49883"/>
    </cofactor>
    <text evidence="3">Binds 1 [4Fe-4S] cluster.</text>
</comment>
<comment type="similarity">
    <text evidence="3">Belongs to the complex I 51 kDa subunit family.</text>
</comment>
<sequence length="417" mass="45632">MLKKEDRIFTNLHGEQSHDLKSSKKLGDWDNTKALLNKGKEWIIEEVKKSGLRGRGGAGFSTGTKWSFMPKESKKPSYLVVNADESEPGTCKDRDILRYEPHKLIEGCLLASFAIGANSCYIYIRGEFYNEASNIQRALDEAYKDGLIGKNACGSGFNCDIYLHRGAGAYICGEETALLESLEGKKGMPRLKPPFPAGFGLYGCPTTINNVESIAVVPTILRRGASWFASIGKPNNTGTKIFCISGHVNKPCNVEEAMGIPLKEIIEKHAGGVRGGWDNLKAIIPGGSSVPLLPKSLCETADMDFDSLKAAGSSLGTGGIIVMDKSTDIIYAIARLSKFYMHESCGQCTPCREGTGWMWRVMMRLVKGDAKKSEIDQLLEVTKEIEGHTICALGDAAAWPIQGLIKHFRNEIESRIQ</sequence>
<keyword id="KW-0004">4Fe-4S</keyword>
<keyword id="KW-0285">Flavoprotein</keyword>
<keyword id="KW-0288">FMN</keyword>
<keyword id="KW-0408">Iron</keyword>
<keyword id="KW-0411">Iron-sulfur</keyword>
<keyword id="KW-0479">Metal-binding</keyword>
<keyword id="KW-0520">NAD</keyword>
<keyword id="KW-0874">Quinone</keyword>
<keyword id="KW-1278">Translocase</keyword>
<accession>A8GYE0</accession>
<proteinExistence type="inferred from homology"/>
<gene>
    <name type="primary">nuoF</name>
    <name type="ordered locus">A1I_01365</name>
</gene>
<feature type="chain" id="PRO_0000316285" description="NADH-quinone oxidoreductase subunit F">
    <location>
        <begin position="1"/>
        <end position="417"/>
    </location>
</feature>
<feature type="binding site" evidence="1">
    <location>
        <begin position="54"/>
        <end position="63"/>
    </location>
    <ligand>
        <name>NAD(+)</name>
        <dbReference type="ChEBI" id="CHEBI:57540"/>
    </ligand>
</feature>
<feature type="binding site" evidence="1">
    <location>
        <begin position="166"/>
        <end position="213"/>
    </location>
    <ligand>
        <name>FMN</name>
        <dbReference type="ChEBI" id="CHEBI:58210"/>
    </ligand>
</feature>
<feature type="binding site" evidence="2">
    <location>
        <position position="345"/>
    </location>
    <ligand>
        <name>[4Fe-4S] cluster</name>
        <dbReference type="ChEBI" id="CHEBI:49883"/>
    </ligand>
</feature>
<feature type="binding site" evidence="2">
    <location>
        <position position="348"/>
    </location>
    <ligand>
        <name>[4Fe-4S] cluster</name>
        <dbReference type="ChEBI" id="CHEBI:49883"/>
    </ligand>
</feature>
<feature type="binding site" evidence="2">
    <location>
        <position position="351"/>
    </location>
    <ligand>
        <name>[4Fe-4S] cluster</name>
        <dbReference type="ChEBI" id="CHEBI:49883"/>
    </ligand>
</feature>
<feature type="binding site" evidence="2">
    <location>
        <position position="391"/>
    </location>
    <ligand>
        <name>[4Fe-4S] cluster</name>
        <dbReference type="ChEBI" id="CHEBI:49883"/>
    </ligand>
</feature>